<organism>
    <name type="scientific">Solanum tuberosum</name>
    <name type="common">Potato</name>
    <dbReference type="NCBI Taxonomy" id="4113"/>
    <lineage>
        <taxon>Eukaryota</taxon>
        <taxon>Viridiplantae</taxon>
        <taxon>Streptophyta</taxon>
        <taxon>Embryophyta</taxon>
        <taxon>Tracheophyta</taxon>
        <taxon>Spermatophyta</taxon>
        <taxon>Magnoliopsida</taxon>
        <taxon>eudicotyledons</taxon>
        <taxon>Gunneridae</taxon>
        <taxon>Pentapetalae</taxon>
        <taxon>asterids</taxon>
        <taxon>lamiids</taxon>
        <taxon>Solanales</taxon>
        <taxon>Solanaceae</taxon>
        <taxon>Solanoideae</taxon>
        <taxon>Solaneae</taxon>
        <taxon>Solanum</taxon>
    </lineage>
</organism>
<gene>
    <name type="primary">STH-21</name>
</gene>
<keyword id="KW-0568">Pathogenesis-related protein</keyword>
<keyword id="KW-0611">Plant defense</keyword>
<keyword id="KW-1185">Reference proteome</keyword>
<sequence>MGVTSYTLETTTPVAPTRLFKALVVDSDNLIPKLMPQVKNIEAEGDGSIKKMTFVEGSPIKYLKHKIHVVDDKNLVTKYSMIEGDVLGDKLESISYDLKFEAHGNGGCVCKSIAEYHTKGDYVLKDEDHNEGKKQGMELFKIVEAYLLANPSVYA</sequence>
<protein>
    <recommendedName>
        <fullName>Pathogenesis-related protein STH-21</fullName>
    </recommendedName>
</protein>
<comment type="induction">
    <text>By wounding and fungal elicitor.</text>
</comment>
<comment type="similarity">
    <text evidence="1">Belongs to the BetVI family.</text>
</comment>
<proteinExistence type="evidence at transcript level"/>
<name>PRS1_SOLTU</name>
<dbReference type="EMBL" id="M25156">
    <property type="protein sequence ID" value="AAA03020.1"/>
    <property type="molecule type" value="mRNA"/>
</dbReference>
<dbReference type="EMBL" id="M29042">
    <property type="protein sequence ID" value="AAA02829.1"/>
    <property type="molecule type" value="Unassigned_DNA"/>
</dbReference>
<dbReference type="PIR" id="S35162">
    <property type="entry name" value="S35162"/>
</dbReference>
<dbReference type="RefSeq" id="NP_001274822.1">
    <property type="nucleotide sequence ID" value="NM_001287893.1"/>
</dbReference>
<dbReference type="SMR" id="P17641"/>
<dbReference type="STRING" id="4113.P17641"/>
<dbReference type="GeneID" id="102577683"/>
<dbReference type="KEGG" id="sot:102577683"/>
<dbReference type="InParanoid" id="P17641"/>
<dbReference type="OrthoDB" id="1880172at2759"/>
<dbReference type="Proteomes" id="UP000011115">
    <property type="component" value="Unassembled WGS sequence"/>
</dbReference>
<dbReference type="ExpressionAtlas" id="P17641">
    <property type="expression patterns" value="baseline"/>
</dbReference>
<dbReference type="GO" id="GO:0005737">
    <property type="term" value="C:cytoplasm"/>
    <property type="evidence" value="ECO:0000318"/>
    <property type="project" value="GO_Central"/>
</dbReference>
<dbReference type="GO" id="GO:0005634">
    <property type="term" value="C:nucleus"/>
    <property type="evidence" value="ECO:0000318"/>
    <property type="project" value="GO_Central"/>
</dbReference>
<dbReference type="GO" id="GO:0010427">
    <property type="term" value="F:abscisic acid binding"/>
    <property type="evidence" value="ECO:0000318"/>
    <property type="project" value="GO_Central"/>
</dbReference>
<dbReference type="GO" id="GO:0004864">
    <property type="term" value="F:protein phosphatase inhibitor activity"/>
    <property type="evidence" value="ECO:0000318"/>
    <property type="project" value="GO_Central"/>
</dbReference>
<dbReference type="GO" id="GO:0038023">
    <property type="term" value="F:signaling receptor activity"/>
    <property type="evidence" value="ECO:0000318"/>
    <property type="project" value="GO_Central"/>
</dbReference>
<dbReference type="GO" id="GO:0009738">
    <property type="term" value="P:abscisic acid-activated signaling pathway"/>
    <property type="evidence" value="ECO:0000318"/>
    <property type="project" value="GO_Central"/>
</dbReference>
<dbReference type="GO" id="GO:0006952">
    <property type="term" value="P:defense response"/>
    <property type="evidence" value="ECO:0007669"/>
    <property type="project" value="UniProtKB-KW"/>
</dbReference>
<dbReference type="CDD" id="cd07816">
    <property type="entry name" value="Bet_v1-like"/>
    <property type="match status" value="1"/>
</dbReference>
<dbReference type="FunFam" id="3.30.530.20:FF:000007">
    <property type="entry name" value="Major pollen allergen Bet v 1-A"/>
    <property type="match status" value="1"/>
</dbReference>
<dbReference type="Gene3D" id="3.30.530.20">
    <property type="match status" value="1"/>
</dbReference>
<dbReference type="InterPro" id="IPR000916">
    <property type="entry name" value="Bet_v_I/MLP"/>
</dbReference>
<dbReference type="InterPro" id="IPR024949">
    <property type="entry name" value="Bet_v_I_allergen"/>
</dbReference>
<dbReference type="InterPro" id="IPR050279">
    <property type="entry name" value="Plant_def-hormone_signal"/>
</dbReference>
<dbReference type="InterPro" id="IPR023393">
    <property type="entry name" value="START-like_dom_sf"/>
</dbReference>
<dbReference type="PANTHER" id="PTHR31213">
    <property type="entry name" value="OS08G0374000 PROTEIN-RELATED"/>
    <property type="match status" value="1"/>
</dbReference>
<dbReference type="PANTHER" id="PTHR31213:SF149">
    <property type="entry name" value="PATHOGENESIS-RELATED PROTEIN STH-2"/>
    <property type="match status" value="1"/>
</dbReference>
<dbReference type="Pfam" id="PF00407">
    <property type="entry name" value="Bet_v_1"/>
    <property type="match status" value="1"/>
</dbReference>
<dbReference type="PRINTS" id="PR00634">
    <property type="entry name" value="BETALLERGEN"/>
</dbReference>
<dbReference type="SUPFAM" id="SSF55961">
    <property type="entry name" value="Bet v1-like"/>
    <property type="match status" value="1"/>
</dbReference>
<dbReference type="PROSITE" id="PS00451">
    <property type="entry name" value="PATHOGENESIS_BETVI"/>
    <property type="match status" value="1"/>
</dbReference>
<accession>P17641</accession>
<reference key="1">
    <citation type="journal article" date="1990" name="Plant Mol. Biol.">
        <title>Nucleotide sequence of a pathogenesis-related gene of potato.</title>
        <authorList>
            <person name="Matton D.P."/>
            <person name="Bell B."/>
            <person name="Brisson N."/>
        </authorList>
    </citation>
    <scope>NUCLEOTIDE SEQUENCE</scope>
</reference>
<reference key="2">
    <citation type="journal article" date="1989" name="Mol. Plant Microbe Interact.">
        <title>Cloning, expression, and sequence conservation of pathogenesis-related gene transcripts of potato.</title>
        <authorList>
            <person name="Matton D.P."/>
            <person name="Brisson N."/>
        </authorList>
    </citation>
    <scope>NUCLEOTIDE SEQUENCE [MRNA]</scope>
</reference>
<reference key="3">
    <citation type="journal article" date="1993" name="Plant Mol. Biol.">
        <title>Identification of cis-acting elements involved in the regulation of the pathogenesis-related gene STH-2 in potato.</title>
        <authorList>
            <person name="Matton D.P."/>
            <person name="Prescott G."/>
            <person name="Bertrand C."/>
            <person name="Camirand A."/>
            <person name="Brisson N."/>
        </authorList>
    </citation>
    <scope>NUCLEOTIDE SEQUENCE</scope>
</reference>
<feature type="chain" id="PRO_0000154160" description="Pathogenesis-related protein STH-21">
    <location>
        <begin position="1"/>
        <end position="155"/>
    </location>
</feature>
<evidence type="ECO:0000305" key="1"/>